<evidence type="ECO:0000255" key="1">
    <source>
        <dbReference type="HAMAP-Rule" id="MF_00787"/>
    </source>
</evidence>
<name>CBID_GEOSW</name>
<feature type="chain" id="PRO_1000212938" description="Cobalt-precorrin-5B C(1)-methyltransferase">
    <location>
        <begin position="1"/>
        <end position="365"/>
    </location>
</feature>
<proteinExistence type="inferred from homology"/>
<organism>
    <name type="scientific">Geobacillus sp. (strain WCH70)</name>
    <dbReference type="NCBI Taxonomy" id="471223"/>
    <lineage>
        <taxon>Bacteria</taxon>
        <taxon>Bacillati</taxon>
        <taxon>Bacillota</taxon>
        <taxon>Bacilli</taxon>
        <taxon>Bacillales</taxon>
        <taxon>Anoxybacillaceae</taxon>
        <taxon>Geobacillus</taxon>
    </lineage>
</organism>
<protein>
    <recommendedName>
        <fullName evidence="1">Cobalt-precorrin-5B C(1)-methyltransferase</fullName>
        <ecNumber evidence="1">2.1.1.195</ecNumber>
    </recommendedName>
    <alternativeName>
        <fullName evidence="1">Cobalt-precorrin-6A synthase</fullName>
    </alternativeName>
</protein>
<gene>
    <name evidence="1" type="primary">cbiD</name>
    <name type="ordered locus">GWCH70_1554</name>
</gene>
<sequence>METKKTLREGYTTGACATAATKAALTALITGIIQTEATIYLPVGRWATFAIEACEIYGESVKATVIKDGGDDPDATHGAAIVSTVSWAEQPGIHLDGGKGVGRVTKPGLPVPVGEAAINPIPRKMIHETAREVLEQYGISRGVNVIISVPNGEEIAKKTLNARLGIIGGISILGTRGIVIPFSTSAYRASIIQAIQVAKANGCDHVVITTGGRSEKFAMRQYPHLPEEAFIEMGDFVGFTLKQCKRLGIRTVSMVGMMGKFSKVAQGIMMVHSKSAPIDFSFLAAIAEQAGASPELVAAVREANTASQVGEMMQEAGNERFFEILCDHCCLSALREVGGGMTVETSLYTMGGQLLGKAVRNDAGD</sequence>
<accession>C5DAN8</accession>
<dbReference type="EC" id="2.1.1.195" evidence="1"/>
<dbReference type="EMBL" id="CP001638">
    <property type="protein sequence ID" value="ACS24352.1"/>
    <property type="molecule type" value="Genomic_DNA"/>
</dbReference>
<dbReference type="SMR" id="C5DAN8"/>
<dbReference type="STRING" id="471223.GWCH70_1554"/>
<dbReference type="KEGG" id="gwc:GWCH70_1554"/>
<dbReference type="eggNOG" id="COG1903">
    <property type="taxonomic scope" value="Bacteria"/>
</dbReference>
<dbReference type="HOGENOM" id="CLU_041273_0_0_9"/>
<dbReference type="OrthoDB" id="6439987at2"/>
<dbReference type="UniPathway" id="UPA00148">
    <property type="reaction ID" value="UER00227"/>
</dbReference>
<dbReference type="GO" id="GO:0043780">
    <property type="term" value="F:cobalt-precorrin-5B C1-methyltransferase activity"/>
    <property type="evidence" value="ECO:0007669"/>
    <property type="project" value="RHEA"/>
</dbReference>
<dbReference type="GO" id="GO:0019251">
    <property type="term" value="P:anaerobic cobalamin biosynthetic process"/>
    <property type="evidence" value="ECO:0007669"/>
    <property type="project" value="UniProtKB-UniRule"/>
</dbReference>
<dbReference type="GO" id="GO:0032259">
    <property type="term" value="P:methylation"/>
    <property type="evidence" value="ECO:0007669"/>
    <property type="project" value="UniProtKB-KW"/>
</dbReference>
<dbReference type="Gene3D" id="3.30.2110.10">
    <property type="entry name" value="CbiD-like"/>
    <property type="match status" value="1"/>
</dbReference>
<dbReference type="HAMAP" id="MF_00787">
    <property type="entry name" value="CbiD"/>
    <property type="match status" value="1"/>
</dbReference>
<dbReference type="InterPro" id="IPR002748">
    <property type="entry name" value="CbiD"/>
</dbReference>
<dbReference type="InterPro" id="IPR036074">
    <property type="entry name" value="CbiD_sf"/>
</dbReference>
<dbReference type="NCBIfam" id="TIGR00312">
    <property type="entry name" value="cbiD"/>
    <property type="match status" value="1"/>
</dbReference>
<dbReference type="NCBIfam" id="NF000849">
    <property type="entry name" value="PRK00075.1-1"/>
    <property type="match status" value="1"/>
</dbReference>
<dbReference type="PANTHER" id="PTHR35863">
    <property type="entry name" value="COBALT-PRECORRIN-5B C(1)-METHYLTRANSFERASE"/>
    <property type="match status" value="1"/>
</dbReference>
<dbReference type="PANTHER" id="PTHR35863:SF1">
    <property type="entry name" value="COBALT-PRECORRIN-5B C(1)-METHYLTRANSFERASE"/>
    <property type="match status" value="1"/>
</dbReference>
<dbReference type="Pfam" id="PF01888">
    <property type="entry name" value="CbiD"/>
    <property type="match status" value="1"/>
</dbReference>
<dbReference type="PIRSF" id="PIRSF026782">
    <property type="entry name" value="CbiD"/>
    <property type="match status" value="1"/>
</dbReference>
<dbReference type="SUPFAM" id="SSF111342">
    <property type="entry name" value="CbiD-like"/>
    <property type="match status" value="1"/>
</dbReference>
<reference key="1">
    <citation type="submission" date="2009-06" db="EMBL/GenBank/DDBJ databases">
        <title>Complete sequence of chromosome of Geopacillus sp. WCH70.</title>
        <authorList>
            <consortium name="US DOE Joint Genome Institute"/>
            <person name="Lucas S."/>
            <person name="Copeland A."/>
            <person name="Lapidus A."/>
            <person name="Glavina del Rio T."/>
            <person name="Dalin E."/>
            <person name="Tice H."/>
            <person name="Bruce D."/>
            <person name="Goodwin L."/>
            <person name="Pitluck S."/>
            <person name="Chertkov O."/>
            <person name="Brettin T."/>
            <person name="Detter J.C."/>
            <person name="Han C."/>
            <person name="Larimer F."/>
            <person name="Land M."/>
            <person name="Hauser L."/>
            <person name="Kyrpides N."/>
            <person name="Mikhailova N."/>
            <person name="Brumm P."/>
            <person name="Mead D.A."/>
            <person name="Richardson P."/>
        </authorList>
    </citation>
    <scope>NUCLEOTIDE SEQUENCE [LARGE SCALE GENOMIC DNA]</scope>
    <source>
        <strain>WCH70</strain>
    </source>
</reference>
<comment type="function">
    <text evidence="1">Catalyzes the methylation of C-1 in cobalt-precorrin-5B to form cobalt-precorrin-6A.</text>
</comment>
<comment type="catalytic activity">
    <reaction evidence="1">
        <text>Co-precorrin-5B + S-adenosyl-L-methionine = Co-precorrin-6A + S-adenosyl-L-homocysteine</text>
        <dbReference type="Rhea" id="RHEA:26285"/>
        <dbReference type="ChEBI" id="CHEBI:57856"/>
        <dbReference type="ChEBI" id="CHEBI:59789"/>
        <dbReference type="ChEBI" id="CHEBI:60063"/>
        <dbReference type="ChEBI" id="CHEBI:60064"/>
        <dbReference type="EC" id="2.1.1.195"/>
    </reaction>
</comment>
<comment type="pathway">
    <text evidence="1">Cofactor biosynthesis; adenosylcobalamin biosynthesis; cob(II)yrinate a,c-diamide from sirohydrochlorin (anaerobic route): step 6/10.</text>
</comment>
<comment type="similarity">
    <text evidence="1">Belongs to the CbiD family.</text>
</comment>
<keyword id="KW-0169">Cobalamin biosynthesis</keyword>
<keyword id="KW-0489">Methyltransferase</keyword>
<keyword id="KW-0949">S-adenosyl-L-methionine</keyword>
<keyword id="KW-0808">Transferase</keyword>